<comment type="function">
    <text>Ferredoxins are iron-sulfur proteins that transfer electrons in a wide variety of metabolic reactions.</text>
</comment>
<comment type="function">
    <text>Putative electron transport protein for the cytochrome P-450SOY system from the same organism.</text>
</comment>
<comment type="cofactor">
    <cofactor>
        <name>[4Fe-4S] cluster</name>
        <dbReference type="ChEBI" id="CHEBI:49883"/>
    </cofactor>
    <text>Binds 1 [4Fe-4S] cluster.</text>
</comment>
<comment type="cofactor">
    <cofactor>
        <name>[3Fe-4S] cluster</name>
        <dbReference type="ChEBI" id="CHEBI:21137"/>
    </cofactor>
    <text>Binds 1 [3Fe-4S] cluster.</text>
</comment>
<name>FER_STRGR</name>
<protein>
    <recommendedName>
        <fullName>Ferredoxin</fullName>
    </recommendedName>
</protein>
<dbReference type="PIR" id="S08287">
    <property type="entry name" value="S08287"/>
</dbReference>
<dbReference type="SMR" id="P13279"/>
<dbReference type="STRING" id="1911.GCA_001715295_01960"/>
<dbReference type="GO" id="GO:0051538">
    <property type="term" value="F:3 iron, 4 sulfur cluster binding"/>
    <property type="evidence" value="ECO:0007669"/>
    <property type="project" value="UniProtKB-KW"/>
</dbReference>
<dbReference type="GO" id="GO:0051539">
    <property type="term" value="F:4 iron, 4 sulfur cluster binding"/>
    <property type="evidence" value="ECO:0007669"/>
    <property type="project" value="UniProtKB-KW"/>
</dbReference>
<dbReference type="GO" id="GO:0009055">
    <property type="term" value="F:electron transfer activity"/>
    <property type="evidence" value="ECO:0007669"/>
    <property type="project" value="InterPro"/>
</dbReference>
<dbReference type="GO" id="GO:0046872">
    <property type="term" value="F:metal ion binding"/>
    <property type="evidence" value="ECO:0007669"/>
    <property type="project" value="UniProtKB-KW"/>
</dbReference>
<dbReference type="Gene3D" id="3.30.70.20">
    <property type="match status" value="1"/>
</dbReference>
<dbReference type="InterPro" id="IPR017896">
    <property type="entry name" value="4Fe4S_Fe-S-bd"/>
</dbReference>
<dbReference type="InterPro" id="IPR017900">
    <property type="entry name" value="4Fe4S_Fe_S_CS"/>
</dbReference>
<dbReference type="InterPro" id="IPR000813">
    <property type="entry name" value="7Fe_ferredoxin"/>
</dbReference>
<dbReference type="InterPro" id="IPR054830">
    <property type="entry name" value="FdxA_Actino"/>
</dbReference>
<dbReference type="InterPro" id="IPR050294">
    <property type="entry name" value="RnfB_subfamily"/>
</dbReference>
<dbReference type="NCBIfam" id="NF045480">
    <property type="entry name" value="FdxA_Actino"/>
    <property type="match status" value="1"/>
</dbReference>
<dbReference type="PANTHER" id="PTHR42859:SF2">
    <property type="entry name" value="FERREDOXIN"/>
    <property type="match status" value="1"/>
</dbReference>
<dbReference type="PANTHER" id="PTHR42859">
    <property type="entry name" value="OXIDOREDUCTASE"/>
    <property type="match status" value="1"/>
</dbReference>
<dbReference type="Pfam" id="PF00037">
    <property type="entry name" value="Fer4"/>
    <property type="match status" value="1"/>
</dbReference>
<dbReference type="PRINTS" id="PR00354">
    <property type="entry name" value="7FE8SFRDOXIN"/>
</dbReference>
<dbReference type="SUPFAM" id="SSF54862">
    <property type="entry name" value="4Fe-4S ferredoxins"/>
    <property type="match status" value="1"/>
</dbReference>
<dbReference type="PROSITE" id="PS00198">
    <property type="entry name" value="4FE4S_FER_1"/>
    <property type="match status" value="1"/>
</dbReference>
<dbReference type="PROSITE" id="PS51379">
    <property type="entry name" value="4FE4S_FER_2"/>
    <property type="match status" value="1"/>
</dbReference>
<accession>P13279</accession>
<proteinExistence type="evidence at protein level"/>
<organism>
    <name type="scientific">Streptomyces griseus</name>
    <dbReference type="NCBI Taxonomy" id="1911"/>
    <lineage>
        <taxon>Bacteria</taxon>
        <taxon>Bacillati</taxon>
        <taxon>Actinomycetota</taxon>
        <taxon>Actinomycetes</taxon>
        <taxon>Kitasatosporales</taxon>
        <taxon>Streptomycetaceae</taxon>
        <taxon>Streptomyces</taxon>
    </lineage>
</organism>
<feature type="chain" id="PRO_0000159104" description="Ferredoxin">
    <location>
        <begin position="1"/>
        <end position="105"/>
    </location>
</feature>
<feature type="domain" description="4Fe-4S ferredoxin-type" evidence="2">
    <location>
        <begin position="30"/>
        <end position="59"/>
    </location>
</feature>
<feature type="binding site" evidence="1">
    <location>
        <position position="8"/>
    </location>
    <ligand>
        <name>[3Fe-4S] cluster</name>
        <dbReference type="ChEBI" id="CHEBI:21137"/>
    </ligand>
</feature>
<feature type="binding site" evidence="1">
    <location>
        <position position="16"/>
    </location>
    <ligand>
        <name>[3Fe-4S] cluster</name>
        <dbReference type="ChEBI" id="CHEBI:21137"/>
    </ligand>
</feature>
<feature type="binding site" evidence="1">
    <location>
        <position position="20"/>
    </location>
    <ligand>
        <name>[4Fe-4S] cluster</name>
        <dbReference type="ChEBI" id="CHEBI:49883"/>
    </ligand>
</feature>
<feature type="binding site" evidence="1">
    <location>
        <position position="39"/>
    </location>
    <ligand>
        <name>[4Fe-4S] cluster</name>
        <dbReference type="ChEBI" id="CHEBI:49883"/>
    </ligand>
</feature>
<feature type="binding site" evidence="1">
    <location>
        <position position="42"/>
    </location>
    <ligand>
        <name>[4Fe-4S] cluster</name>
        <dbReference type="ChEBI" id="CHEBI:49883"/>
    </ligand>
</feature>
<feature type="binding site" evidence="1">
    <location>
        <position position="45"/>
    </location>
    <ligand>
        <name>[4Fe-4S] cluster</name>
        <dbReference type="ChEBI" id="CHEBI:49883"/>
    </ligand>
</feature>
<feature type="binding site" evidence="1">
    <location>
        <position position="49"/>
    </location>
    <ligand>
        <name>[3Fe-4S] cluster</name>
        <dbReference type="ChEBI" id="CHEBI:21137"/>
    </ligand>
</feature>
<sequence length="105" mass="11663">TYVIAQPCVDVKDKACIEECPVDCIYEGQRSLYIHPDECVDCGACEPVCPVEAIFYEDDTPEEWKDYYKANVEFFDDLGSPGGASKLGLIERDHPFVAGLPPQNA</sequence>
<evidence type="ECO:0000250" key="1"/>
<evidence type="ECO:0000255" key="2">
    <source>
        <dbReference type="PROSITE-ProRule" id="PRU00711"/>
    </source>
</evidence>
<reference key="1">
    <citation type="journal article" date="1990" name="Biochim. Biophys. Acta">
        <title>Primary structure of a 7Fe ferredoxin from Streptomyces griseus.</title>
        <authorList>
            <person name="Trower M.K."/>
            <person name="Marshall J.E."/>
            <person name="Doleman M.S."/>
            <person name="Emptage M.H."/>
            <person name="Sariaslani F.S."/>
        </authorList>
    </citation>
    <scope>PROTEIN SEQUENCE</scope>
    <source>
        <strain>ATCC 13273 / DSM 12135 / NBRC 3746</strain>
    </source>
</reference>
<keyword id="KW-0003">3Fe-4S</keyword>
<keyword id="KW-0004">4Fe-4S</keyword>
<keyword id="KW-0903">Direct protein sequencing</keyword>
<keyword id="KW-0249">Electron transport</keyword>
<keyword id="KW-0408">Iron</keyword>
<keyword id="KW-0411">Iron-sulfur</keyword>
<keyword id="KW-0479">Metal-binding</keyword>
<keyword id="KW-0677">Repeat</keyword>
<keyword id="KW-0813">Transport</keyword>